<keyword id="KW-1003">Cell membrane</keyword>
<keyword id="KW-0204">Cytolysis</keyword>
<keyword id="KW-0472">Membrane</keyword>
<keyword id="KW-0812">Transmembrane</keyword>
<keyword id="KW-1133">Transmembrane helix</keyword>
<dbReference type="EMBL" id="CP001177">
    <property type="protein sequence ID" value="ACJ78245.1"/>
    <property type="molecule type" value="Genomic_DNA"/>
</dbReference>
<dbReference type="KEGG" id="bcr:BCAH187_A5619"/>
<dbReference type="HOGENOM" id="CLU_082099_1_0_9"/>
<dbReference type="Proteomes" id="UP000002214">
    <property type="component" value="Chromosome"/>
</dbReference>
<dbReference type="GO" id="GO:0005886">
    <property type="term" value="C:plasma membrane"/>
    <property type="evidence" value="ECO:0007669"/>
    <property type="project" value="UniProtKB-SubCell"/>
</dbReference>
<dbReference type="GO" id="GO:0019835">
    <property type="term" value="P:cytolysis"/>
    <property type="evidence" value="ECO:0007669"/>
    <property type="project" value="UniProtKB-UniRule"/>
</dbReference>
<dbReference type="GO" id="GO:0031640">
    <property type="term" value="P:killing of cells of another organism"/>
    <property type="evidence" value="ECO:0007669"/>
    <property type="project" value="UniProtKB-KW"/>
</dbReference>
<dbReference type="GO" id="GO:0012501">
    <property type="term" value="P:programmed cell death"/>
    <property type="evidence" value="ECO:0007669"/>
    <property type="project" value="UniProtKB-UniRule"/>
</dbReference>
<dbReference type="HAMAP" id="MF_01142">
    <property type="entry name" value="LrgB"/>
    <property type="match status" value="1"/>
</dbReference>
<dbReference type="InterPro" id="IPR024891">
    <property type="entry name" value="Antiholin-like_LrgB"/>
</dbReference>
<dbReference type="InterPro" id="IPR007300">
    <property type="entry name" value="CidB/LrgB"/>
</dbReference>
<dbReference type="NCBIfam" id="NF003291">
    <property type="entry name" value="PRK04288.1"/>
    <property type="match status" value="1"/>
</dbReference>
<dbReference type="PANTHER" id="PTHR30249:SF0">
    <property type="entry name" value="PLASTIDAL GLYCOLATE_GLYCERATE TRANSLOCATOR 1, CHLOROPLASTIC"/>
    <property type="match status" value="1"/>
</dbReference>
<dbReference type="PANTHER" id="PTHR30249">
    <property type="entry name" value="PUTATIVE SEROTONIN TRANSPORTER"/>
    <property type="match status" value="1"/>
</dbReference>
<dbReference type="Pfam" id="PF04172">
    <property type="entry name" value="LrgB"/>
    <property type="match status" value="1"/>
</dbReference>
<reference key="1">
    <citation type="submission" date="2008-10" db="EMBL/GenBank/DDBJ databases">
        <title>Genome sequence of Bacillus cereus AH187.</title>
        <authorList>
            <person name="Dodson R.J."/>
            <person name="Durkin A.S."/>
            <person name="Rosovitz M.J."/>
            <person name="Rasko D.A."/>
            <person name="Kolsto A.B."/>
            <person name="Okstad O.A."/>
            <person name="Ravel J."/>
            <person name="Sutton G."/>
        </authorList>
    </citation>
    <scope>NUCLEOTIDE SEQUENCE [LARGE SCALE GENOMIC DNA]</scope>
    <source>
        <strain>AH187</strain>
    </source>
</reference>
<comment type="function">
    <text evidence="1">Inhibits the expression or activity of extracellular murein hydrolases by interacting, possibly with LrgA, with the holin-like protein CidA. The LrgAB and CidA proteins may affect the proton motive force of the membrane. May be involved in programmed cell death (PCD), possibly triggering PCD in response to antibiotics and environmental stresses.</text>
</comment>
<comment type="subcellular location">
    <subcellularLocation>
        <location evidence="1">Cell membrane</location>
        <topology evidence="1">Multi-pass membrane protein</topology>
    </subcellularLocation>
</comment>
<comment type="similarity">
    <text evidence="1">Belongs to the CidB/LrgB family. LrgB subfamily.</text>
</comment>
<sequence length="230" mass="24349">MASTMTPYFGIVVSLIAYGIGTLLFKHSKGFFLFTPLFVAMVLGIVFLKVGNFTFEEYNTGGKMISFFLEPATIAFAIPLYKQVDKLKKYWWQILSAIVVGSICSVIVVFIVAKAIGLDTAVMNSMLPQAATTAIALPISESIGGIPAITSFAVIFNAVIVYALGALFLKTFRVKHPIAKGLALGTAGHALGVAVGIEMGEVEAAMASIAVTVVGVVTVVVIPMFMPFIG</sequence>
<gene>
    <name evidence="1" type="primary">lrgB</name>
    <name type="ordered locus">BCAH187_A5619</name>
</gene>
<accession>B7HZC3</accession>
<protein>
    <recommendedName>
        <fullName evidence="1">Antiholin-like protein LrgB</fullName>
    </recommendedName>
</protein>
<organism>
    <name type="scientific">Bacillus cereus (strain AH187)</name>
    <dbReference type="NCBI Taxonomy" id="405534"/>
    <lineage>
        <taxon>Bacteria</taxon>
        <taxon>Bacillati</taxon>
        <taxon>Bacillota</taxon>
        <taxon>Bacilli</taxon>
        <taxon>Bacillales</taxon>
        <taxon>Bacillaceae</taxon>
        <taxon>Bacillus</taxon>
        <taxon>Bacillus cereus group</taxon>
    </lineage>
</organism>
<name>LRGB_BACC7</name>
<feature type="chain" id="PRO_1000137351" description="Antiholin-like protein LrgB">
    <location>
        <begin position="1"/>
        <end position="230"/>
    </location>
</feature>
<feature type="transmembrane region" description="Helical" evidence="1">
    <location>
        <begin position="5"/>
        <end position="25"/>
    </location>
</feature>
<feature type="transmembrane region" description="Helical" evidence="1">
    <location>
        <begin position="30"/>
        <end position="50"/>
    </location>
</feature>
<feature type="transmembrane region" description="Helical" evidence="1">
    <location>
        <begin position="61"/>
        <end position="81"/>
    </location>
</feature>
<feature type="transmembrane region" description="Helical" evidence="1">
    <location>
        <begin position="92"/>
        <end position="112"/>
    </location>
</feature>
<feature type="transmembrane region" description="Helical" evidence="1">
    <location>
        <begin position="149"/>
        <end position="169"/>
    </location>
</feature>
<feature type="transmembrane region" description="Helical" evidence="1">
    <location>
        <begin position="177"/>
        <end position="197"/>
    </location>
</feature>
<feature type="transmembrane region" description="Helical" evidence="1">
    <location>
        <begin position="209"/>
        <end position="229"/>
    </location>
</feature>
<proteinExistence type="inferred from homology"/>
<evidence type="ECO:0000255" key="1">
    <source>
        <dbReference type="HAMAP-Rule" id="MF_01142"/>
    </source>
</evidence>